<organism>
    <name type="scientific">Drosophila melanogaster</name>
    <name type="common">Fruit fly</name>
    <dbReference type="NCBI Taxonomy" id="7227"/>
    <lineage>
        <taxon>Eukaryota</taxon>
        <taxon>Metazoa</taxon>
        <taxon>Ecdysozoa</taxon>
        <taxon>Arthropoda</taxon>
        <taxon>Hexapoda</taxon>
        <taxon>Insecta</taxon>
        <taxon>Pterygota</taxon>
        <taxon>Neoptera</taxon>
        <taxon>Endopterygota</taxon>
        <taxon>Diptera</taxon>
        <taxon>Brachycera</taxon>
        <taxon>Muscomorpha</taxon>
        <taxon>Ephydroidea</taxon>
        <taxon>Drosophilidae</taxon>
        <taxon>Drosophila</taxon>
        <taxon>Sophophora</taxon>
    </lineage>
</organism>
<keyword id="KW-1015">Disulfide bond</keyword>
<keyword id="KW-0325">Glycoprotein</keyword>
<keyword id="KW-0349">Heme</keyword>
<keyword id="KW-0376">Hydrogen peroxide</keyword>
<keyword id="KW-0408">Iron</keyword>
<keyword id="KW-0479">Metal-binding</keyword>
<keyword id="KW-0560">Oxidoreductase</keyword>
<keyword id="KW-0575">Peroxidase</keyword>
<keyword id="KW-1185">Reference proteome</keyword>
<keyword id="KW-0964">Secreted</keyword>
<keyword id="KW-0732">Signal</keyword>
<name>PERO_DROME</name>
<feature type="signal peptide" evidence="2">
    <location>
        <begin position="1"/>
        <end position="20"/>
    </location>
</feature>
<feature type="chain" id="PRO_0000023638" description="Peroxidase">
    <location>
        <begin position="21"/>
        <end position="690"/>
    </location>
</feature>
<feature type="active site" description="Proton acceptor" evidence="3">
    <location>
        <position position="185"/>
    </location>
</feature>
<feature type="binding site" description="axial binding residue" evidence="3">
    <location>
        <position position="437"/>
    </location>
    <ligand>
        <name>heme b</name>
        <dbReference type="ChEBI" id="CHEBI:60344"/>
    </ligand>
    <ligandPart>
        <name>Fe</name>
        <dbReference type="ChEBI" id="CHEBI:18248"/>
    </ligandPart>
</feature>
<feature type="site" description="Transition state stabilizer" evidence="3">
    <location>
        <position position="331"/>
    </location>
</feature>
<feature type="glycosylation site" description="N-linked (GlcNAc...) asparagine" evidence="2">
    <location>
        <position position="310"/>
    </location>
</feature>
<feature type="disulfide bond" evidence="3">
    <location>
        <begin position="100"/>
        <end position="112"/>
    </location>
</feature>
<feature type="disulfide bond" evidence="3">
    <location>
        <begin position="315"/>
        <end position="324"/>
    </location>
</feature>
<feature type="disulfide bond" evidence="3">
    <location>
        <begin position="536"/>
        <end position="592"/>
    </location>
</feature>
<feature type="disulfide bond" evidence="3">
    <location>
        <begin position="636"/>
        <end position="662"/>
    </location>
</feature>
<feature type="sequence conflict" description="In Ref. 1; CAA48238 and 2; AAS48542." evidence="5" ref="1 2">
    <original>A</original>
    <variation>T</variation>
    <location>
        <position position="584"/>
    </location>
</feature>
<feature type="sequence conflict" description="In Ref. 1; CAA48238 and 2; AAS48542." evidence="5" ref="1 2">
    <original>L</original>
    <variation>P</variation>
    <location>
        <position position="678"/>
    </location>
</feature>
<dbReference type="EC" id="1.11.1.7"/>
<dbReference type="EMBL" id="X68131">
    <property type="protein sequence ID" value="CAA48238.1"/>
    <property type="molecule type" value="Genomic_DNA"/>
</dbReference>
<dbReference type="EMBL" id="AY541497">
    <property type="protein sequence ID" value="AAS48542.1"/>
    <property type="molecule type" value="mRNA"/>
</dbReference>
<dbReference type="EMBL" id="AE014297">
    <property type="protein sequence ID" value="AAS65161.1"/>
    <property type="molecule type" value="Genomic_DNA"/>
</dbReference>
<dbReference type="EMBL" id="BK002598">
    <property type="protein sequence ID" value="DAA04104.1"/>
    <property type="status" value="ALT_INIT"/>
    <property type="molecule type" value="Genomic_DNA"/>
</dbReference>
<dbReference type="PIR" id="S28222">
    <property type="entry name" value="S28222"/>
</dbReference>
<dbReference type="RefSeq" id="NP_001163633.1">
    <property type="nucleotide sequence ID" value="NM_001170162.2"/>
</dbReference>
<dbReference type="RefSeq" id="NP_996223.1">
    <property type="nucleotide sequence ID" value="NM_206501.3"/>
</dbReference>
<dbReference type="SMR" id="Q01603"/>
<dbReference type="FunCoup" id="Q01603">
    <property type="interactions" value="3"/>
</dbReference>
<dbReference type="IntAct" id="Q01603">
    <property type="interactions" value="1"/>
</dbReference>
<dbReference type="STRING" id="7227.FBpp0088343"/>
<dbReference type="PeroxiBase" id="4118">
    <property type="entry name" value="DmPxt02-A"/>
</dbReference>
<dbReference type="GlyCosmos" id="Q01603">
    <property type="glycosylation" value="1 site, No reported glycans"/>
</dbReference>
<dbReference type="GlyGen" id="Q01603">
    <property type="glycosylation" value="1 site"/>
</dbReference>
<dbReference type="PaxDb" id="7227-FBpp0088343"/>
<dbReference type="EnsemblMetazoa" id="FBtr0089287">
    <property type="protein sequence ID" value="FBpp0088343"/>
    <property type="gene ID" value="FBgn0004577"/>
</dbReference>
<dbReference type="EnsemblMetazoa" id="FBtr0301526">
    <property type="protein sequence ID" value="FBpp0290741"/>
    <property type="gene ID" value="FBgn0004577"/>
</dbReference>
<dbReference type="GeneID" id="2768671"/>
<dbReference type="KEGG" id="dme:Dmel_CG3477"/>
<dbReference type="UCSC" id="CG3477-RA">
    <property type="organism name" value="d. melanogaster"/>
</dbReference>
<dbReference type="AGR" id="FB:FBgn0004577"/>
<dbReference type="CTD" id="2768671"/>
<dbReference type="FlyBase" id="FBgn0004577">
    <property type="gene designation" value="Pxd"/>
</dbReference>
<dbReference type="VEuPathDB" id="VectorBase:FBgn0004577"/>
<dbReference type="eggNOG" id="KOG2408">
    <property type="taxonomic scope" value="Eukaryota"/>
</dbReference>
<dbReference type="GeneTree" id="ENSGT00940000172100"/>
<dbReference type="InParanoid" id="Q01603"/>
<dbReference type="OMA" id="SCNHLER"/>
<dbReference type="OrthoDB" id="823504at2759"/>
<dbReference type="PhylomeDB" id="Q01603"/>
<dbReference type="BioGRID-ORCS" id="2768671">
    <property type="hits" value="0 hits in 1 CRISPR screen"/>
</dbReference>
<dbReference type="GenomeRNAi" id="2768671"/>
<dbReference type="PRO" id="PR:Q01603"/>
<dbReference type="Proteomes" id="UP000000803">
    <property type="component" value="Chromosome 3R"/>
</dbReference>
<dbReference type="Bgee" id="FBgn0004577">
    <property type="expression patterns" value="Expressed in capitellum (Drosophila) and 7 other cell types or tissues"/>
</dbReference>
<dbReference type="ExpressionAtlas" id="Q01603">
    <property type="expression patterns" value="baseline and differential"/>
</dbReference>
<dbReference type="GO" id="GO:0042600">
    <property type="term" value="C:egg chorion"/>
    <property type="evidence" value="ECO:0000314"/>
    <property type="project" value="FlyBase"/>
</dbReference>
<dbReference type="GO" id="GO:0005576">
    <property type="term" value="C:extracellular region"/>
    <property type="evidence" value="ECO:0007669"/>
    <property type="project" value="UniProtKB-SubCell"/>
</dbReference>
<dbReference type="GO" id="GO:0020037">
    <property type="term" value="F:heme binding"/>
    <property type="evidence" value="ECO:0007669"/>
    <property type="project" value="InterPro"/>
</dbReference>
<dbReference type="GO" id="GO:0140825">
    <property type="term" value="F:lactoperoxidase activity"/>
    <property type="evidence" value="ECO:0007669"/>
    <property type="project" value="UniProtKB-EC"/>
</dbReference>
<dbReference type="GO" id="GO:0046872">
    <property type="term" value="F:metal ion binding"/>
    <property type="evidence" value="ECO:0007669"/>
    <property type="project" value="UniProtKB-KW"/>
</dbReference>
<dbReference type="GO" id="GO:0004601">
    <property type="term" value="F:peroxidase activity"/>
    <property type="evidence" value="ECO:0000314"/>
    <property type="project" value="FlyBase"/>
</dbReference>
<dbReference type="GO" id="GO:0007306">
    <property type="term" value="P:egg chorion assembly"/>
    <property type="evidence" value="ECO:0000305"/>
    <property type="project" value="FlyBase"/>
</dbReference>
<dbReference type="GO" id="GO:0042744">
    <property type="term" value="P:hydrogen peroxide catabolic process"/>
    <property type="evidence" value="ECO:0007669"/>
    <property type="project" value="UniProtKB-KW"/>
</dbReference>
<dbReference type="GO" id="GO:0006979">
    <property type="term" value="P:response to oxidative stress"/>
    <property type="evidence" value="ECO:0007669"/>
    <property type="project" value="InterPro"/>
</dbReference>
<dbReference type="CDD" id="cd09823">
    <property type="entry name" value="peroxinectin_like"/>
    <property type="match status" value="1"/>
</dbReference>
<dbReference type="FunFam" id="1.10.640.10:FF:000009">
    <property type="entry name" value="Peroxidase, isoform B"/>
    <property type="match status" value="1"/>
</dbReference>
<dbReference type="Gene3D" id="1.10.640.10">
    <property type="entry name" value="Haem peroxidase domain superfamily, animal type"/>
    <property type="match status" value="1"/>
</dbReference>
<dbReference type="InterPro" id="IPR019791">
    <property type="entry name" value="Haem_peroxidase_animal"/>
</dbReference>
<dbReference type="InterPro" id="IPR010255">
    <property type="entry name" value="Haem_peroxidase_sf"/>
</dbReference>
<dbReference type="InterPro" id="IPR037120">
    <property type="entry name" value="Haem_peroxidase_sf_animal"/>
</dbReference>
<dbReference type="PANTHER" id="PTHR11475">
    <property type="entry name" value="OXIDASE/PEROXIDASE"/>
    <property type="match status" value="1"/>
</dbReference>
<dbReference type="PANTHER" id="PTHR11475:SF86">
    <property type="entry name" value="PEROXIDASE"/>
    <property type="match status" value="1"/>
</dbReference>
<dbReference type="Pfam" id="PF03098">
    <property type="entry name" value="An_peroxidase"/>
    <property type="match status" value="1"/>
</dbReference>
<dbReference type="PRINTS" id="PR00457">
    <property type="entry name" value="ANPEROXIDASE"/>
</dbReference>
<dbReference type="SUPFAM" id="SSF48113">
    <property type="entry name" value="Heme-dependent peroxidases"/>
    <property type="match status" value="1"/>
</dbReference>
<dbReference type="PROSITE" id="PS50292">
    <property type="entry name" value="PEROXIDASE_3"/>
    <property type="match status" value="1"/>
</dbReference>
<reference key="1">
    <citation type="journal article" date="1992" name="Biochim. Biophys. Acta">
        <title>Molecular characterization of a putative peroxidase gene of Drosophila melanogaster.</title>
        <authorList>
            <person name="Ng S.W."/>
            <person name="Wiedemann M."/>
            <person name="Kontermann R."/>
            <person name="Petersen G."/>
        </authorList>
    </citation>
    <scope>NUCLEOTIDE SEQUENCE [GENOMIC DNA]</scope>
</reference>
<reference key="2">
    <citation type="journal article" date="2005" name="Insect Biochem. Mol. Biol.">
        <title>The enzymatic component of Drosophila melanogaster chorion is the Pxd peroxidase.</title>
        <authorList>
            <person name="Konstandi O.A."/>
            <person name="Papassideri I.S."/>
            <person name="Stravopodis D.J."/>
            <person name="Kenoutis C.A."/>
            <person name="Hasan Z."/>
            <person name="Katsorchis T."/>
            <person name="Wever R."/>
            <person name="Margaritis L.H."/>
        </authorList>
    </citation>
    <scope>NUCLEOTIDE SEQUENCE [MRNA]</scope>
    <scope>FUNCTION</scope>
    <source>
        <tissue>Follicular cell</tissue>
    </source>
</reference>
<reference key="3">
    <citation type="journal article" date="2000" name="Science">
        <title>The genome sequence of Drosophila melanogaster.</title>
        <authorList>
            <person name="Adams M.D."/>
            <person name="Celniker S.E."/>
            <person name="Holt R.A."/>
            <person name="Evans C.A."/>
            <person name="Gocayne J.D."/>
            <person name="Amanatides P.G."/>
            <person name="Scherer S.E."/>
            <person name="Li P.W."/>
            <person name="Hoskins R.A."/>
            <person name="Galle R.F."/>
            <person name="George R.A."/>
            <person name="Lewis S.E."/>
            <person name="Richards S."/>
            <person name="Ashburner M."/>
            <person name="Henderson S.N."/>
            <person name="Sutton G.G."/>
            <person name="Wortman J.R."/>
            <person name="Yandell M.D."/>
            <person name="Zhang Q."/>
            <person name="Chen L.X."/>
            <person name="Brandon R.C."/>
            <person name="Rogers Y.-H.C."/>
            <person name="Blazej R.G."/>
            <person name="Champe M."/>
            <person name="Pfeiffer B.D."/>
            <person name="Wan K.H."/>
            <person name="Doyle C."/>
            <person name="Baxter E.G."/>
            <person name="Helt G."/>
            <person name="Nelson C.R."/>
            <person name="Miklos G.L.G."/>
            <person name="Abril J.F."/>
            <person name="Agbayani A."/>
            <person name="An H.-J."/>
            <person name="Andrews-Pfannkoch C."/>
            <person name="Baldwin D."/>
            <person name="Ballew R.M."/>
            <person name="Basu A."/>
            <person name="Baxendale J."/>
            <person name="Bayraktaroglu L."/>
            <person name="Beasley E.M."/>
            <person name="Beeson K.Y."/>
            <person name="Benos P.V."/>
            <person name="Berman B.P."/>
            <person name="Bhandari D."/>
            <person name="Bolshakov S."/>
            <person name="Borkova D."/>
            <person name="Botchan M.R."/>
            <person name="Bouck J."/>
            <person name="Brokstein P."/>
            <person name="Brottier P."/>
            <person name="Burtis K.C."/>
            <person name="Busam D.A."/>
            <person name="Butler H."/>
            <person name="Cadieu E."/>
            <person name="Center A."/>
            <person name="Chandra I."/>
            <person name="Cherry J.M."/>
            <person name="Cawley S."/>
            <person name="Dahlke C."/>
            <person name="Davenport L.B."/>
            <person name="Davies P."/>
            <person name="de Pablos B."/>
            <person name="Delcher A."/>
            <person name="Deng Z."/>
            <person name="Mays A.D."/>
            <person name="Dew I."/>
            <person name="Dietz S.M."/>
            <person name="Dodson K."/>
            <person name="Doup L.E."/>
            <person name="Downes M."/>
            <person name="Dugan-Rocha S."/>
            <person name="Dunkov B.C."/>
            <person name="Dunn P."/>
            <person name="Durbin K.J."/>
            <person name="Evangelista C.C."/>
            <person name="Ferraz C."/>
            <person name="Ferriera S."/>
            <person name="Fleischmann W."/>
            <person name="Fosler C."/>
            <person name="Gabrielian A.E."/>
            <person name="Garg N.S."/>
            <person name="Gelbart W.M."/>
            <person name="Glasser K."/>
            <person name="Glodek A."/>
            <person name="Gong F."/>
            <person name="Gorrell J.H."/>
            <person name="Gu Z."/>
            <person name="Guan P."/>
            <person name="Harris M."/>
            <person name="Harris N.L."/>
            <person name="Harvey D.A."/>
            <person name="Heiman T.J."/>
            <person name="Hernandez J.R."/>
            <person name="Houck J."/>
            <person name="Hostin D."/>
            <person name="Houston K.A."/>
            <person name="Howland T.J."/>
            <person name="Wei M.-H."/>
            <person name="Ibegwam C."/>
            <person name="Jalali M."/>
            <person name="Kalush F."/>
            <person name="Karpen G.H."/>
            <person name="Ke Z."/>
            <person name="Kennison J.A."/>
            <person name="Ketchum K.A."/>
            <person name="Kimmel B.E."/>
            <person name="Kodira C.D."/>
            <person name="Kraft C.L."/>
            <person name="Kravitz S."/>
            <person name="Kulp D."/>
            <person name="Lai Z."/>
            <person name="Lasko P."/>
            <person name="Lei Y."/>
            <person name="Levitsky A.A."/>
            <person name="Li J.H."/>
            <person name="Li Z."/>
            <person name="Liang Y."/>
            <person name="Lin X."/>
            <person name="Liu X."/>
            <person name="Mattei B."/>
            <person name="McIntosh T.C."/>
            <person name="McLeod M.P."/>
            <person name="McPherson D."/>
            <person name="Merkulov G."/>
            <person name="Milshina N.V."/>
            <person name="Mobarry C."/>
            <person name="Morris J."/>
            <person name="Moshrefi A."/>
            <person name="Mount S.M."/>
            <person name="Moy M."/>
            <person name="Murphy B."/>
            <person name="Murphy L."/>
            <person name="Muzny D.M."/>
            <person name="Nelson D.L."/>
            <person name="Nelson D.R."/>
            <person name="Nelson K.A."/>
            <person name="Nixon K."/>
            <person name="Nusskern D.R."/>
            <person name="Pacleb J.M."/>
            <person name="Palazzolo M."/>
            <person name="Pittman G.S."/>
            <person name="Pan S."/>
            <person name="Pollard J."/>
            <person name="Puri V."/>
            <person name="Reese M.G."/>
            <person name="Reinert K."/>
            <person name="Remington K."/>
            <person name="Saunders R.D.C."/>
            <person name="Scheeler F."/>
            <person name="Shen H."/>
            <person name="Shue B.C."/>
            <person name="Siden-Kiamos I."/>
            <person name="Simpson M."/>
            <person name="Skupski M.P."/>
            <person name="Smith T.J."/>
            <person name="Spier E."/>
            <person name="Spradling A.C."/>
            <person name="Stapleton M."/>
            <person name="Strong R."/>
            <person name="Sun E."/>
            <person name="Svirskas R."/>
            <person name="Tector C."/>
            <person name="Turner R."/>
            <person name="Venter E."/>
            <person name="Wang A.H."/>
            <person name="Wang X."/>
            <person name="Wang Z.-Y."/>
            <person name="Wassarman D.A."/>
            <person name="Weinstock G.M."/>
            <person name="Weissenbach J."/>
            <person name="Williams S.M."/>
            <person name="Woodage T."/>
            <person name="Worley K.C."/>
            <person name="Wu D."/>
            <person name="Yang S."/>
            <person name="Yao Q.A."/>
            <person name="Ye J."/>
            <person name="Yeh R.-F."/>
            <person name="Zaveri J.S."/>
            <person name="Zhan M."/>
            <person name="Zhang G."/>
            <person name="Zhao Q."/>
            <person name="Zheng L."/>
            <person name="Zheng X.H."/>
            <person name="Zhong F.N."/>
            <person name="Zhong W."/>
            <person name="Zhou X."/>
            <person name="Zhu S.C."/>
            <person name="Zhu X."/>
            <person name="Smith H.O."/>
            <person name="Gibbs R.A."/>
            <person name="Myers E.W."/>
            <person name="Rubin G.M."/>
            <person name="Venter J.C."/>
        </authorList>
    </citation>
    <scope>NUCLEOTIDE SEQUENCE [LARGE SCALE GENOMIC DNA]</scope>
    <source>
        <strain>Berkeley</strain>
    </source>
</reference>
<reference key="4">
    <citation type="journal article" date="2002" name="Genome Biol.">
        <title>Annotation of the Drosophila melanogaster euchromatic genome: a systematic review.</title>
        <authorList>
            <person name="Misra S."/>
            <person name="Crosby M.A."/>
            <person name="Mungall C.J."/>
            <person name="Matthews B.B."/>
            <person name="Campbell K.S."/>
            <person name="Hradecky P."/>
            <person name="Huang Y."/>
            <person name="Kaminker J.S."/>
            <person name="Millburn G.H."/>
            <person name="Prochnik S.E."/>
            <person name="Smith C.D."/>
            <person name="Tupy J.L."/>
            <person name="Whitfield E.J."/>
            <person name="Bayraktaroglu L."/>
            <person name="Berman B.P."/>
            <person name="Bettencourt B.R."/>
            <person name="Celniker S.E."/>
            <person name="de Grey A.D.N.J."/>
            <person name="Drysdale R.A."/>
            <person name="Harris N.L."/>
            <person name="Richter J."/>
            <person name="Russo S."/>
            <person name="Schroeder A.J."/>
            <person name="Shu S.Q."/>
            <person name="Stapleton M."/>
            <person name="Yamada C."/>
            <person name="Ashburner M."/>
            <person name="Gelbart W.M."/>
            <person name="Rubin G.M."/>
            <person name="Lewis S.E."/>
        </authorList>
    </citation>
    <scope>GENOME REANNOTATION</scope>
    <source>
        <strain>Berkeley</strain>
    </source>
</reference>
<reference key="5">
    <citation type="journal article" date="2003" name="Genome Biol.">
        <title>An integrated gene annotation and transcriptional profiling approach towards the full gene content of the Drosophila genome.</title>
        <authorList>
            <person name="Hild M."/>
            <person name="Beckmann B."/>
            <person name="Haas S.A."/>
            <person name="Koch B."/>
            <person name="Solovyev V."/>
            <person name="Busold C."/>
            <person name="Fellenberg K."/>
            <person name="Boutros M."/>
            <person name="Vingron M."/>
            <person name="Sauer F."/>
            <person name="Hoheisel J.D."/>
            <person name="Paro R."/>
        </authorList>
    </citation>
    <scope>GENOME REANNOTATION</scope>
</reference>
<protein>
    <recommendedName>
        <fullName>Peroxidase</fullName>
        <shortName>DmPO</shortName>
        <ecNumber>1.11.1.7</ecNumber>
    </recommendedName>
    <alternativeName>
        <fullName>Chorion peroxidase</fullName>
    </alternativeName>
</protein>
<proteinExistence type="evidence at transcript level"/>
<accession>Q01603</accession>
<accession>Q6IJW8</accession>
<accession>Q7KSF9</accession>
<gene>
    <name type="primary">Pxd</name>
    <name type="synonym">HDC14047</name>
    <name type="synonym">PO</name>
    <name type="ORF">CG3477</name>
</gene>
<evidence type="ECO:0000250" key="1"/>
<evidence type="ECO:0000255" key="2"/>
<evidence type="ECO:0000255" key="3">
    <source>
        <dbReference type="PROSITE-ProRule" id="PRU00298"/>
    </source>
</evidence>
<evidence type="ECO:0000269" key="4">
    <source>
    </source>
</evidence>
<evidence type="ECO:0000305" key="5"/>
<sequence>MIRARDLLLLALLGFISSALGLKVSSGYHIVHNQPQSSFPNYHGFSYLQGSAPYVIGNSLPTSPAPQNPFSSPASPPVSAYGYSFPTAGRVSCAAPPAVCEKTAYRTLDGSCNHLEQPGLGVANSKYGRLLTPKYADGISAPTRSVTGDELPSARLVSLVAFGEQDVPDPEFTLHNMQWGQIMTHDMSMQAGGTQSKKHPTRCCTDDGRLIGLDTAHKTCFAIIVPPHDPAYSQVGTECLNFVRTLTDRDSNCQYQGGPAEQLTVVTSYLDLSLVYGNSIQQNSDIREFQGGRMIVEERNGAKWLPLSRNVTGDCDAVDASEVCYRSGDVRVNQNPGLAILQTILLREHNRIADALSALNPHYDDRTLFQEARKINIAQYQQISYYEWLPIFLGGENMLKNRLIYKAPSGSYINDFDPNIDPSVLNEHATAAFRYFHSQIEGRLDLLSELRQVLGSLTLSDWFNRPGIIEVGDNFDSLTRGHATQPEELTDINFDRQIKHFLFRRNMPFGSDLRSLDIQRNRDHGLASYNDMREFCGLRRAHSWEGYGDLISPPILEKLKSLYPSHEDVDLTVGASLEAHVAGALAGPTFLCILTEQFYRTRVGDRFFFENGDKLTGFTPDQLEELRKASMARLLCDNGNHISSMQPEAFRTVSHSNPIIPCSNIPQVDLTKWIDQKLYATVDPSHYGKK</sequence>
<comment type="function">
    <text evidence="4">Involved in the chorion hardening process, through protein cross-linking mediated by the formation of di- and tri-tyrosine bonds.</text>
</comment>
<comment type="catalytic activity">
    <reaction>
        <text>2 a phenolic donor + H2O2 = 2 a phenolic radical donor + 2 H2O</text>
        <dbReference type="Rhea" id="RHEA:56136"/>
        <dbReference type="ChEBI" id="CHEBI:15377"/>
        <dbReference type="ChEBI" id="CHEBI:16240"/>
        <dbReference type="ChEBI" id="CHEBI:139520"/>
        <dbReference type="ChEBI" id="CHEBI:139521"/>
        <dbReference type="EC" id="1.11.1.7"/>
    </reaction>
</comment>
<comment type="cofactor">
    <cofactor evidence="1">
        <name>heme b</name>
        <dbReference type="ChEBI" id="CHEBI:60344"/>
    </cofactor>
    <text evidence="1">Binds 1 heme b (iron(II)-protoporphyrin IX) group per subunit.</text>
</comment>
<comment type="subcellular location">
    <subcellularLocation>
        <location evidence="5">Secreted</location>
    </subcellularLocation>
</comment>
<comment type="similarity">
    <text evidence="3">Belongs to the peroxidase family. XPO subfamily.</text>
</comment>
<comment type="sequence caution" evidence="5">
    <conflict type="erroneous initiation">
        <sequence resource="EMBL-CDS" id="DAA04104"/>
    </conflict>
</comment>